<proteinExistence type="inferred from homology"/>
<evidence type="ECO:0000255" key="1">
    <source>
        <dbReference type="HAMAP-Rule" id="MF_00462"/>
    </source>
</evidence>
<name>RNFD_SHEDO</name>
<reference key="1">
    <citation type="submission" date="2006-03" db="EMBL/GenBank/DDBJ databases">
        <title>Complete sequence of Shewanella denitrificans OS217.</title>
        <authorList>
            <consortium name="US DOE Joint Genome Institute"/>
            <person name="Copeland A."/>
            <person name="Lucas S."/>
            <person name="Lapidus A."/>
            <person name="Barry K."/>
            <person name="Detter J.C."/>
            <person name="Glavina del Rio T."/>
            <person name="Hammon N."/>
            <person name="Israni S."/>
            <person name="Dalin E."/>
            <person name="Tice H."/>
            <person name="Pitluck S."/>
            <person name="Brettin T."/>
            <person name="Bruce D."/>
            <person name="Han C."/>
            <person name="Tapia R."/>
            <person name="Gilna P."/>
            <person name="Kiss H."/>
            <person name="Schmutz J."/>
            <person name="Larimer F."/>
            <person name="Land M."/>
            <person name="Hauser L."/>
            <person name="Kyrpides N."/>
            <person name="Lykidis A."/>
            <person name="Richardson P."/>
        </authorList>
    </citation>
    <scope>NUCLEOTIDE SEQUENCE [LARGE SCALE GENOMIC DNA]</scope>
    <source>
        <strain>OS217 / ATCC BAA-1090 / DSM 15013</strain>
    </source>
</reference>
<sequence length="350" mass="37533">MAFKITSSPHVSQGIQTATVMRRVALCLIPGILVQTLFFGFGSLIQLCLAIFTAYLGEALVLKARGRPILITLKDNSALVTASLLALSIPPLAPWWLVVIGSLFAIIIVKHLYGGLGHNLFNPAMAGYVVLLVSFPLQMTSWVAPQGIALNGVDALAAMKAIFAIGPSLGNDFYRLGVDGIAMATPLDTIKTDLSLGLTTLESFAKPIFDGSYGVGWFWVNLAYLAGGLVLLKLKVIRWHISVGILAALFVCASFGFLISPDTHVSPLFHWFSGGTMLAVFFIATDPVTAATSPRGRLIFGASIGIIIYLIRTYGGYPDAVAFAVLLANMCAPFIDHYVRPRTYGHRSAN</sequence>
<feature type="chain" id="PRO_0000298236" description="Ion-translocating oxidoreductase complex subunit D">
    <location>
        <begin position="1"/>
        <end position="350"/>
    </location>
</feature>
<feature type="transmembrane region" description="Helical" evidence="1">
    <location>
        <begin position="25"/>
        <end position="45"/>
    </location>
</feature>
<feature type="transmembrane region" description="Helical" evidence="1">
    <location>
        <begin position="89"/>
        <end position="109"/>
    </location>
</feature>
<feature type="transmembrane region" description="Helical" evidence="1">
    <location>
        <begin position="124"/>
        <end position="144"/>
    </location>
</feature>
<feature type="transmembrane region" description="Helical" evidence="1">
    <location>
        <begin position="212"/>
        <end position="232"/>
    </location>
</feature>
<feature type="transmembrane region" description="Helical" evidence="1">
    <location>
        <begin position="239"/>
        <end position="259"/>
    </location>
</feature>
<feature type="transmembrane region" description="Helical" evidence="1">
    <location>
        <begin position="265"/>
        <end position="285"/>
    </location>
</feature>
<feature type="transmembrane region" description="Helical" evidence="1">
    <location>
        <begin position="298"/>
        <end position="318"/>
    </location>
</feature>
<feature type="transmembrane region" description="Helical" evidence="1">
    <location>
        <begin position="319"/>
        <end position="339"/>
    </location>
</feature>
<feature type="modified residue" description="FMN phosphoryl threonine" evidence="1">
    <location>
        <position position="185"/>
    </location>
</feature>
<dbReference type="EC" id="7.-.-.-" evidence="1"/>
<dbReference type="EMBL" id="CP000302">
    <property type="protein sequence ID" value="ABE55149.1"/>
    <property type="molecule type" value="Genomic_DNA"/>
</dbReference>
<dbReference type="RefSeq" id="WP_011496306.1">
    <property type="nucleotide sequence ID" value="NC_007954.1"/>
</dbReference>
<dbReference type="SMR" id="Q12N27"/>
<dbReference type="STRING" id="318161.Sden_1866"/>
<dbReference type="KEGG" id="sdn:Sden_1866"/>
<dbReference type="eggNOG" id="COG4658">
    <property type="taxonomic scope" value="Bacteria"/>
</dbReference>
<dbReference type="HOGENOM" id="CLU_042020_0_0_6"/>
<dbReference type="OrthoDB" id="9776359at2"/>
<dbReference type="Proteomes" id="UP000001982">
    <property type="component" value="Chromosome"/>
</dbReference>
<dbReference type="GO" id="GO:0005886">
    <property type="term" value="C:plasma membrane"/>
    <property type="evidence" value="ECO:0007669"/>
    <property type="project" value="UniProtKB-SubCell"/>
</dbReference>
<dbReference type="GO" id="GO:0022900">
    <property type="term" value="P:electron transport chain"/>
    <property type="evidence" value="ECO:0007669"/>
    <property type="project" value="UniProtKB-UniRule"/>
</dbReference>
<dbReference type="GO" id="GO:0055085">
    <property type="term" value="P:transmembrane transport"/>
    <property type="evidence" value="ECO:0007669"/>
    <property type="project" value="InterPro"/>
</dbReference>
<dbReference type="HAMAP" id="MF_00462">
    <property type="entry name" value="RsxD_RnfD"/>
    <property type="match status" value="1"/>
</dbReference>
<dbReference type="InterPro" id="IPR004338">
    <property type="entry name" value="NqrB/RnfD"/>
</dbReference>
<dbReference type="InterPro" id="IPR011303">
    <property type="entry name" value="RnfD_bac"/>
</dbReference>
<dbReference type="NCBIfam" id="NF002011">
    <property type="entry name" value="PRK00816.1"/>
    <property type="match status" value="1"/>
</dbReference>
<dbReference type="NCBIfam" id="TIGR01946">
    <property type="entry name" value="rnfD"/>
    <property type="match status" value="1"/>
</dbReference>
<dbReference type="PANTHER" id="PTHR30578">
    <property type="entry name" value="ELECTRON TRANSPORT COMPLEX PROTEIN RNFD"/>
    <property type="match status" value="1"/>
</dbReference>
<dbReference type="PANTHER" id="PTHR30578:SF0">
    <property type="entry name" value="ION-TRANSLOCATING OXIDOREDUCTASE COMPLEX SUBUNIT D"/>
    <property type="match status" value="1"/>
</dbReference>
<dbReference type="Pfam" id="PF03116">
    <property type="entry name" value="NQR2_RnfD_RnfE"/>
    <property type="match status" value="1"/>
</dbReference>
<accession>Q12N27</accession>
<organism>
    <name type="scientific">Shewanella denitrificans (strain OS217 / ATCC BAA-1090 / DSM 15013)</name>
    <dbReference type="NCBI Taxonomy" id="318161"/>
    <lineage>
        <taxon>Bacteria</taxon>
        <taxon>Pseudomonadati</taxon>
        <taxon>Pseudomonadota</taxon>
        <taxon>Gammaproteobacteria</taxon>
        <taxon>Alteromonadales</taxon>
        <taxon>Shewanellaceae</taxon>
        <taxon>Shewanella</taxon>
    </lineage>
</organism>
<protein>
    <recommendedName>
        <fullName evidence="1">Ion-translocating oxidoreductase complex subunit D</fullName>
        <ecNumber evidence="1">7.-.-.-</ecNumber>
    </recommendedName>
    <alternativeName>
        <fullName evidence="1">Rnf electron transport complex subunit D</fullName>
    </alternativeName>
</protein>
<gene>
    <name evidence="1" type="primary">rnfD</name>
    <name type="ordered locus">Sden_1866</name>
</gene>
<keyword id="KW-0997">Cell inner membrane</keyword>
<keyword id="KW-1003">Cell membrane</keyword>
<keyword id="KW-0249">Electron transport</keyword>
<keyword id="KW-0285">Flavoprotein</keyword>
<keyword id="KW-0288">FMN</keyword>
<keyword id="KW-0472">Membrane</keyword>
<keyword id="KW-0597">Phosphoprotein</keyword>
<keyword id="KW-1185">Reference proteome</keyword>
<keyword id="KW-1278">Translocase</keyword>
<keyword id="KW-0812">Transmembrane</keyword>
<keyword id="KW-1133">Transmembrane helix</keyword>
<keyword id="KW-0813">Transport</keyword>
<comment type="function">
    <text evidence="1">Part of a membrane-bound complex that couples electron transfer with translocation of ions across the membrane.</text>
</comment>
<comment type="cofactor">
    <cofactor evidence="1">
        <name>FMN</name>
        <dbReference type="ChEBI" id="CHEBI:58210"/>
    </cofactor>
</comment>
<comment type="subunit">
    <text evidence="1">The complex is composed of six subunits: RnfA, RnfB, RnfC, RnfD, RnfE and RnfG.</text>
</comment>
<comment type="subcellular location">
    <subcellularLocation>
        <location evidence="1">Cell inner membrane</location>
        <topology evidence="1">Multi-pass membrane protein</topology>
    </subcellularLocation>
</comment>
<comment type="similarity">
    <text evidence="1">Belongs to the NqrB/RnfD family.</text>
</comment>